<sequence>MAAGVAAWLPFARAAAIGWMPVANCPMPLAPADKNKRQDELIVLNVSGRRFQTWRTTLERYPDTLLGSTEKEFFFNEDTKEYFFDRDPEVFRCVLNFYRTGKLHYPRYECISAYDDELAFYGILPEIIGDCCYEEYKDRKRENAERLMDDNESENNQESMPSLSFRQTMWRAFENPHTSTLALVFYYVTGFFIAVSVITNVVETVPCGTVPGSKELPCGERYSVAFFCLDTACVMIFTVEYLLRLFAAPSRYRFIRSVMSIIDVVAIMPYYIGLVMTNNEDVSGAFVTLRVFRVFRIFKFSRHSQGLRILGYTLKSCASELGFLLFSLTMAIIIFATVMFYAEKGSSASKFTSIPASFWYTIVTMTTLGYGDMVPKTIAGKIFGSICSLSGVLVIALPVPVIVSNFSRIYHQNQRADKRRAQKKARLARIRVAKTGSSNAYLHSKRNGLLNEALELTGTPEEEHMGKTTSLIESQHHHLLHCLEKTTGLSYLVDDPLLSVRTSTIKNHEFIDEQMFEQNCMESSMQNYPSTRSPSLSSHSGLTTTCCSRRSKKTTHLPNSNLPATRLRSMQELSTIHIQGSEQPSLTTSRSSLNLKADDGLRPNCKTSQITTAIISIPTPPALTPEGESRPPPASPGPNTNIPSITSNVVKVSVL</sequence>
<organism>
    <name type="scientific">Rattus norvegicus</name>
    <name type="common">Rat</name>
    <dbReference type="NCBI Taxonomy" id="10116"/>
    <lineage>
        <taxon>Eukaryota</taxon>
        <taxon>Metazoa</taxon>
        <taxon>Chordata</taxon>
        <taxon>Craniata</taxon>
        <taxon>Vertebrata</taxon>
        <taxon>Euteleostomi</taxon>
        <taxon>Mammalia</taxon>
        <taxon>Eutheria</taxon>
        <taxon>Euarchontoglires</taxon>
        <taxon>Glires</taxon>
        <taxon>Rodentia</taxon>
        <taxon>Myomorpha</taxon>
        <taxon>Muroidea</taxon>
        <taxon>Muridae</taxon>
        <taxon>Murinae</taxon>
        <taxon>Rattus</taxon>
    </lineage>
</organism>
<evidence type="ECO:0000250" key="1">
    <source>
        <dbReference type="UniProtKB" id="P63142"/>
    </source>
</evidence>
<evidence type="ECO:0000250" key="2">
    <source>
        <dbReference type="UniProtKB" id="Q63881"/>
    </source>
</evidence>
<evidence type="ECO:0000250" key="3">
    <source>
        <dbReference type="UniProtKB" id="Q9NZV8"/>
    </source>
</evidence>
<evidence type="ECO:0000250" key="4">
    <source>
        <dbReference type="UniProtKB" id="Q9UK17"/>
    </source>
</evidence>
<evidence type="ECO:0000250" key="5">
    <source>
        <dbReference type="UniProtKB" id="Q9Z0V1"/>
    </source>
</evidence>
<evidence type="ECO:0000255" key="6"/>
<evidence type="ECO:0000256" key="7">
    <source>
        <dbReference type="SAM" id="MobiDB-lite"/>
    </source>
</evidence>
<evidence type="ECO:0000269" key="8">
    <source>
    </source>
</evidence>
<evidence type="ECO:0000269" key="9">
    <source>
    </source>
</evidence>
<evidence type="ECO:0000269" key="10">
    <source>
    </source>
</evidence>
<evidence type="ECO:0000269" key="11">
    <source>
    </source>
</evidence>
<evidence type="ECO:0000269" key="12">
    <source>
    </source>
</evidence>
<evidence type="ECO:0000269" key="13">
    <source>
    </source>
</evidence>
<evidence type="ECO:0000269" key="14">
    <source>
    </source>
</evidence>
<evidence type="ECO:0000269" key="15">
    <source>
    </source>
</evidence>
<evidence type="ECO:0000269" key="16">
    <source>
    </source>
</evidence>
<evidence type="ECO:0000269" key="17">
    <source>
    </source>
</evidence>
<evidence type="ECO:0000303" key="18">
    <source>
    </source>
</evidence>
<evidence type="ECO:0000303" key="19">
    <source>
    </source>
</evidence>
<evidence type="ECO:0000303" key="20">
    <source>
    </source>
</evidence>
<evidence type="ECO:0000305" key="21"/>
<evidence type="ECO:0000305" key="22">
    <source>
    </source>
</evidence>
<evidence type="ECO:0000305" key="23">
    <source>
    </source>
</evidence>
<evidence type="ECO:0000312" key="24">
    <source>
        <dbReference type="RGD" id="68394"/>
    </source>
</evidence>
<evidence type="ECO:0007744" key="25">
    <source>
        <dbReference type="PDB" id="2I2R"/>
    </source>
</evidence>
<evidence type="ECO:0007744" key="26">
    <source>
    </source>
</evidence>
<evidence type="ECO:0007829" key="27">
    <source>
        <dbReference type="PDB" id="2I2R"/>
    </source>
</evidence>
<keyword id="KW-0002">3D-structure</keyword>
<keyword id="KW-0025">Alternative splicing</keyword>
<keyword id="KW-1003">Cell membrane</keyword>
<keyword id="KW-0966">Cell projection</keyword>
<keyword id="KW-0407">Ion channel</keyword>
<keyword id="KW-0406">Ion transport</keyword>
<keyword id="KW-0472">Membrane</keyword>
<keyword id="KW-0479">Metal-binding</keyword>
<keyword id="KW-0597">Phosphoprotein</keyword>
<keyword id="KW-0630">Potassium</keyword>
<keyword id="KW-0631">Potassium channel</keyword>
<keyword id="KW-0633">Potassium transport</keyword>
<keyword id="KW-1185">Reference proteome</keyword>
<keyword id="KW-0812">Transmembrane</keyword>
<keyword id="KW-1133">Transmembrane helix</keyword>
<keyword id="KW-0813">Transport</keyword>
<keyword id="KW-0851">Voltage-gated channel</keyword>
<keyword id="KW-0862">Zinc</keyword>
<protein>
    <recommendedName>
        <fullName evidence="21">A-type voltage-gated potassium channel KCND3</fullName>
    </recommendedName>
    <alternativeName>
        <fullName>Potassium voltage-gated channel subfamily D member 3</fullName>
    </alternativeName>
    <alternativeName>
        <fullName>Voltage-gated potassium channel subunit Kv4.3</fullName>
    </alternativeName>
</protein>
<dbReference type="EMBL" id="U75448">
    <property type="protein sequence ID" value="AAB18337.1"/>
    <property type="molecule type" value="mRNA"/>
</dbReference>
<dbReference type="EMBL" id="U42975">
    <property type="protein sequence ID" value="AAC52695.1"/>
    <property type="molecule type" value="mRNA"/>
</dbReference>
<dbReference type="EMBL" id="L48619">
    <property type="protein sequence ID" value="AAA80459.1"/>
    <property type="molecule type" value="mRNA"/>
</dbReference>
<dbReference type="EMBL" id="AB003587">
    <property type="protein sequence ID" value="BAA24525.1"/>
    <property type="molecule type" value="mRNA"/>
</dbReference>
<dbReference type="EMBL" id="AF334791">
    <property type="protein sequence ID" value="AAK07651.1"/>
    <property type="molecule type" value="mRNA"/>
</dbReference>
<dbReference type="EMBL" id="U92897">
    <property type="protein sequence ID" value="AAB53321.1"/>
    <property type="molecule type" value="mRNA"/>
</dbReference>
<dbReference type="RefSeq" id="NP_001257891.1">
    <property type="nucleotide sequence ID" value="NM_001270962.1"/>
</dbReference>
<dbReference type="RefSeq" id="NP_001257892.1">
    <property type="nucleotide sequence ID" value="NM_001270963.1"/>
</dbReference>
<dbReference type="RefSeq" id="NP_113927.2">
    <molecule id="Q62897-3"/>
    <property type="nucleotide sequence ID" value="NM_031739.3"/>
</dbReference>
<dbReference type="PDB" id="2I2R">
    <property type="method" value="X-ray"/>
    <property type="resolution" value="3.35 A"/>
    <property type="chains" value="A/B/C/D/I/J/K/L=2-143"/>
</dbReference>
<dbReference type="PDBsum" id="2I2R"/>
<dbReference type="SMR" id="Q62897"/>
<dbReference type="BioGRID" id="249307">
    <property type="interactions" value="1"/>
</dbReference>
<dbReference type="CORUM" id="Q62897"/>
<dbReference type="DIP" id="DIP-29245N"/>
<dbReference type="FunCoup" id="Q62897">
    <property type="interactions" value="1538"/>
</dbReference>
<dbReference type="IntAct" id="Q62897">
    <property type="interactions" value="2"/>
</dbReference>
<dbReference type="MINT" id="Q62897"/>
<dbReference type="STRING" id="10116.ENSRNOP00000019997"/>
<dbReference type="ChEMBL" id="CHEMBL5169162"/>
<dbReference type="DrugCentral" id="Q62897"/>
<dbReference type="GuidetoPHARMACOLOGY" id="554"/>
<dbReference type="iPTMnet" id="Q62897"/>
<dbReference type="PhosphoSitePlus" id="Q62897"/>
<dbReference type="PaxDb" id="10116-ENSRNOP00000019997"/>
<dbReference type="ABCD" id="Q62897">
    <property type="antibodies" value="2 sequenced antibodies"/>
</dbReference>
<dbReference type="GeneID" id="65195"/>
<dbReference type="KEGG" id="rno:65195"/>
<dbReference type="UCSC" id="RGD:68394">
    <molecule id="Q62897-1"/>
    <property type="organism name" value="rat"/>
</dbReference>
<dbReference type="AGR" id="RGD:68394"/>
<dbReference type="CTD" id="3752"/>
<dbReference type="RGD" id="68394">
    <property type="gene designation" value="Kcnd3"/>
</dbReference>
<dbReference type="eggNOG" id="KOG4390">
    <property type="taxonomic scope" value="Eukaryota"/>
</dbReference>
<dbReference type="InParanoid" id="Q62897"/>
<dbReference type="OrthoDB" id="433309at2759"/>
<dbReference type="PhylomeDB" id="Q62897"/>
<dbReference type="TreeFam" id="TF313103"/>
<dbReference type="Reactome" id="R-RNO-1296072">
    <property type="pathway name" value="Voltage gated Potassium channels"/>
</dbReference>
<dbReference type="Reactome" id="R-RNO-5576894">
    <property type="pathway name" value="Phase 1 - inactivation of fast Na+ channels"/>
</dbReference>
<dbReference type="EvolutionaryTrace" id="Q62897"/>
<dbReference type="PRO" id="PR:Q62897"/>
<dbReference type="Proteomes" id="UP000002494">
    <property type="component" value="Chromosome 2"/>
</dbReference>
<dbReference type="Bgee" id="ENSRNOG00000014686">
    <property type="expression patterns" value="Expressed in Ammon's horn and 14 other cell types or tissues"/>
</dbReference>
<dbReference type="ExpressionAtlas" id="Q62897">
    <property type="expression patterns" value="baseline and differential"/>
</dbReference>
<dbReference type="GO" id="GO:0005901">
    <property type="term" value="C:caveola"/>
    <property type="evidence" value="ECO:0000314"/>
    <property type="project" value="UniProtKB"/>
</dbReference>
<dbReference type="GO" id="GO:0030425">
    <property type="term" value="C:dendrite"/>
    <property type="evidence" value="ECO:0000314"/>
    <property type="project" value="RGD"/>
</dbReference>
<dbReference type="GO" id="GO:0043197">
    <property type="term" value="C:dendritic spine"/>
    <property type="evidence" value="ECO:0000318"/>
    <property type="project" value="GO_Central"/>
</dbReference>
<dbReference type="GO" id="GO:0098982">
    <property type="term" value="C:GABA-ergic synapse"/>
    <property type="evidence" value="ECO:0000266"/>
    <property type="project" value="RGD"/>
</dbReference>
<dbReference type="GO" id="GO:0071196">
    <property type="term" value="C:Kv4.3-KChIP1 channel complex"/>
    <property type="evidence" value="ECO:0000266"/>
    <property type="project" value="RGD"/>
</dbReference>
<dbReference type="GO" id="GO:0016020">
    <property type="term" value="C:membrane"/>
    <property type="evidence" value="ECO:0000266"/>
    <property type="project" value="RGD"/>
</dbReference>
<dbReference type="GO" id="GO:0043025">
    <property type="term" value="C:neuronal cell body"/>
    <property type="evidence" value="ECO:0000314"/>
    <property type="project" value="RGD"/>
</dbReference>
<dbReference type="GO" id="GO:0097038">
    <property type="term" value="C:perinuclear endoplasmic reticulum"/>
    <property type="evidence" value="ECO:0000314"/>
    <property type="project" value="RGD"/>
</dbReference>
<dbReference type="GO" id="GO:0005886">
    <property type="term" value="C:plasma membrane"/>
    <property type="evidence" value="ECO:0000266"/>
    <property type="project" value="RGD"/>
</dbReference>
<dbReference type="GO" id="GO:0045211">
    <property type="term" value="C:postsynaptic membrane"/>
    <property type="evidence" value="ECO:0000318"/>
    <property type="project" value="GO_Central"/>
</dbReference>
<dbReference type="GO" id="GO:0099634">
    <property type="term" value="C:postsynaptic specialization membrane"/>
    <property type="evidence" value="ECO:0000266"/>
    <property type="project" value="RGD"/>
</dbReference>
<dbReference type="GO" id="GO:0042383">
    <property type="term" value="C:sarcolemma"/>
    <property type="evidence" value="ECO:0007669"/>
    <property type="project" value="UniProtKB-SubCell"/>
</dbReference>
<dbReference type="GO" id="GO:0008076">
    <property type="term" value="C:voltage-gated potassium channel complex"/>
    <property type="evidence" value="ECO:0000314"/>
    <property type="project" value="UniProtKB"/>
</dbReference>
<dbReference type="GO" id="GO:0005250">
    <property type="term" value="F:A-type (transient outward) potassium channel activity"/>
    <property type="evidence" value="ECO:0000314"/>
    <property type="project" value="UniProtKB"/>
</dbReference>
<dbReference type="GO" id="GO:0046872">
    <property type="term" value="F:metal ion binding"/>
    <property type="evidence" value="ECO:0007669"/>
    <property type="project" value="UniProtKB-KW"/>
</dbReference>
<dbReference type="GO" id="GO:0005216">
    <property type="term" value="F:monoatomic ion channel activity"/>
    <property type="evidence" value="ECO:0000314"/>
    <property type="project" value="RGD"/>
</dbReference>
<dbReference type="GO" id="GO:0005267">
    <property type="term" value="F:potassium channel activity"/>
    <property type="evidence" value="ECO:0000314"/>
    <property type="project" value="RGD"/>
</dbReference>
<dbReference type="GO" id="GO:0005249">
    <property type="term" value="F:voltage-gated potassium channel activity"/>
    <property type="evidence" value="ECO:0000314"/>
    <property type="project" value="CAFA"/>
</dbReference>
<dbReference type="GO" id="GO:0001508">
    <property type="term" value="P:action potential"/>
    <property type="evidence" value="ECO:0000318"/>
    <property type="project" value="GO_Central"/>
</dbReference>
<dbReference type="GO" id="GO:0071773">
    <property type="term" value="P:cellular response to BMP stimulus"/>
    <property type="evidence" value="ECO:0000315"/>
    <property type="project" value="RGD"/>
</dbReference>
<dbReference type="GO" id="GO:0086009">
    <property type="term" value="P:membrane repolarization"/>
    <property type="evidence" value="ECO:0000266"/>
    <property type="project" value="RGD"/>
</dbReference>
<dbReference type="GO" id="GO:0098915">
    <property type="term" value="P:membrane repolarization during ventricular cardiac muscle cell action potential"/>
    <property type="evidence" value="ECO:0007669"/>
    <property type="project" value="GOC"/>
</dbReference>
<dbReference type="GO" id="GO:0097623">
    <property type="term" value="P:potassium ion export across plasma membrane"/>
    <property type="evidence" value="ECO:0000314"/>
    <property type="project" value="BHF-UCL"/>
</dbReference>
<dbReference type="GO" id="GO:1990573">
    <property type="term" value="P:potassium ion import across plasma membrane"/>
    <property type="evidence" value="ECO:0000314"/>
    <property type="project" value="CAFA"/>
</dbReference>
<dbReference type="GO" id="GO:0071805">
    <property type="term" value="P:potassium ion transmembrane transport"/>
    <property type="evidence" value="ECO:0000266"/>
    <property type="project" value="RGD"/>
</dbReference>
<dbReference type="GO" id="GO:0006813">
    <property type="term" value="P:potassium ion transport"/>
    <property type="evidence" value="ECO:0000314"/>
    <property type="project" value="UniProtKB"/>
</dbReference>
<dbReference type="GO" id="GO:0051260">
    <property type="term" value="P:protein homooligomerization"/>
    <property type="evidence" value="ECO:0007669"/>
    <property type="project" value="InterPro"/>
</dbReference>
<dbReference type="GO" id="GO:0051262">
    <property type="term" value="P:protein tetramerization"/>
    <property type="evidence" value="ECO:0000266"/>
    <property type="project" value="RGD"/>
</dbReference>
<dbReference type="GO" id="GO:0086091">
    <property type="term" value="P:regulation of heart rate by cardiac conduction"/>
    <property type="evidence" value="ECO:0000266"/>
    <property type="project" value="RGD"/>
</dbReference>
<dbReference type="GO" id="GO:0099625">
    <property type="term" value="P:ventricular cardiac muscle cell membrane repolarization"/>
    <property type="evidence" value="ECO:0000266"/>
    <property type="project" value="RGD"/>
</dbReference>
<dbReference type="CDD" id="cd18419">
    <property type="entry name" value="BTB_POZ_KCND3"/>
    <property type="match status" value="1"/>
</dbReference>
<dbReference type="FunFam" id="1.10.287.70:FF:000073">
    <property type="entry name" value="Potassium voltage-gated channel subfamily D member 2"/>
    <property type="match status" value="1"/>
</dbReference>
<dbReference type="FunFam" id="1.10.287.70:FF:000111">
    <property type="entry name" value="Potassium voltage-gated channel subfamily D member 3"/>
    <property type="match status" value="1"/>
</dbReference>
<dbReference type="FunFam" id="1.20.120.350:FF:000016">
    <property type="entry name" value="Potassium voltage-gated channel subfamily D member 3"/>
    <property type="match status" value="1"/>
</dbReference>
<dbReference type="FunFam" id="3.30.710.10:FF:000004">
    <property type="entry name" value="Potassium voltage-gated channel subfamily D member 3"/>
    <property type="match status" value="1"/>
</dbReference>
<dbReference type="Gene3D" id="1.10.287.70">
    <property type="match status" value="1"/>
</dbReference>
<dbReference type="Gene3D" id="3.30.710.10">
    <property type="entry name" value="Potassium Channel Kv1.1, Chain A"/>
    <property type="match status" value="1"/>
</dbReference>
<dbReference type="Gene3D" id="1.20.120.350">
    <property type="entry name" value="Voltage-gated potassium channels. Chain C"/>
    <property type="match status" value="1"/>
</dbReference>
<dbReference type="InterPro" id="IPR000210">
    <property type="entry name" value="BTB/POZ_dom"/>
</dbReference>
<dbReference type="InterPro" id="IPR005821">
    <property type="entry name" value="Ion_trans_dom"/>
</dbReference>
<dbReference type="InterPro" id="IPR003968">
    <property type="entry name" value="K_chnl_volt-dep_Kv"/>
</dbReference>
<dbReference type="InterPro" id="IPR003975">
    <property type="entry name" value="K_chnl_volt-dep_Kv4"/>
</dbReference>
<dbReference type="InterPro" id="IPR004056">
    <property type="entry name" value="K_chnl_volt-dep_Kv4.3"/>
</dbReference>
<dbReference type="InterPro" id="IPR024587">
    <property type="entry name" value="K_chnl_volt-dep_Kv4_C"/>
</dbReference>
<dbReference type="InterPro" id="IPR021645">
    <property type="entry name" value="Shal-type_N"/>
</dbReference>
<dbReference type="InterPro" id="IPR011333">
    <property type="entry name" value="SKP1/BTB/POZ_sf"/>
</dbReference>
<dbReference type="InterPro" id="IPR003131">
    <property type="entry name" value="T1-type_BTB"/>
</dbReference>
<dbReference type="InterPro" id="IPR028325">
    <property type="entry name" value="VG_K_chnl"/>
</dbReference>
<dbReference type="InterPro" id="IPR027359">
    <property type="entry name" value="Volt_channel_dom_sf"/>
</dbReference>
<dbReference type="PANTHER" id="PTHR11537:SF182">
    <property type="entry name" value="POTASSIUM VOLTAGE-GATED CHANNEL SUBFAMILY D MEMBER 3"/>
    <property type="match status" value="1"/>
</dbReference>
<dbReference type="PANTHER" id="PTHR11537">
    <property type="entry name" value="VOLTAGE-GATED POTASSIUM CHANNEL"/>
    <property type="match status" value="1"/>
</dbReference>
<dbReference type="Pfam" id="PF02214">
    <property type="entry name" value="BTB_2"/>
    <property type="match status" value="1"/>
</dbReference>
<dbReference type="Pfam" id="PF11879">
    <property type="entry name" value="DUF3399"/>
    <property type="match status" value="1"/>
</dbReference>
<dbReference type="Pfam" id="PF00520">
    <property type="entry name" value="Ion_trans"/>
    <property type="match status" value="1"/>
</dbReference>
<dbReference type="Pfam" id="PF11601">
    <property type="entry name" value="Shal-type"/>
    <property type="match status" value="1"/>
</dbReference>
<dbReference type="PRINTS" id="PR00169">
    <property type="entry name" value="KCHANNEL"/>
</dbReference>
<dbReference type="PRINTS" id="PR01518">
    <property type="entry name" value="KV43CHANNEL"/>
</dbReference>
<dbReference type="PRINTS" id="PR01491">
    <property type="entry name" value="KVCHANNEL"/>
</dbReference>
<dbReference type="PRINTS" id="PR01497">
    <property type="entry name" value="SHALCHANNEL"/>
</dbReference>
<dbReference type="SMART" id="SM00225">
    <property type="entry name" value="BTB"/>
    <property type="match status" value="1"/>
</dbReference>
<dbReference type="SUPFAM" id="SSF54695">
    <property type="entry name" value="POZ domain"/>
    <property type="match status" value="1"/>
</dbReference>
<dbReference type="SUPFAM" id="SSF81324">
    <property type="entry name" value="Voltage-gated potassium channels"/>
    <property type="match status" value="1"/>
</dbReference>
<comment type="function">
    <text evidence="4 8 12 14 15 16 17 22 23">Pore-forming (alpha) subunit of voltage-gated A-type potassium channels that mediates transmembrane potassium transport in excitable membranes, in brain and heart (PubMed:17057713, PubMed:8734615, PubMed:8831489, PubMed:9001401, PubMed:9450548). In cardiomyocytes, may generate the transient outward potassium current I(To) (Probable). In neurons, may conduct the transient subthreshold somatodendritic A-type potassium current (ISA) (Probable). Kinetics properties are characterized by fast activation at subthreshold membrane potentials, rapid inactivation, and quick recovery from inactivation (PubMed:17057713, PubMed:8734615, PubMed:8831489, PubMed:9001401, PubMed:9450548). Channel properties are modulated by interactions with regulatory subunits (PubMed:10676964, PubMed:17057713). Interaction with the regulatory subunits KCNIP1 or KCNIP2 modulates the channel gating kinetics namely channel activation and inactivation kinetics and rate of recovery from inactivation (PubMed:10676964, PubMed:17057713). Likewise, interaction with DPP6 modulates the channel gating kinetics namely channel activation and inactivation kinetics (By similarity).</text>
</comment>
<comment type="catalytic activity">
    <reaction evidence="12 14 15 16 17">
        <text>K(+)(in) = K(+)(out)</text>
        <dbReference type="Rhea" id="RHEA:29463"/>
        <dbReference type="ChEBI" id="CHEBI:29103"/>
    </reaction>
</comment>
<comment type="subunit">
    <text evidence="4 5 8 9 12">Homotetramer (By similarity). Heterotetramer with KCND2 (By similarity). Associates with the regulatory subunits KCNIP3 and KCNIP4 (PubMed:10676964, PubMed:11805342). Interacts with KCNE1, KCNE2, SCN1B and KCNAB1 and DLG1 (By similarity). Component of heteromultimeric potassium channels. Identified in potassium channel complexes containing KCND1, KCND2, KCND3, KCNIP1, KCNIP2, KCNIP3, KCNIP4, DPP6 and DPP10 (By similarity). Interacts with KCNIP1; each KCNIP1 monomer interacts with two adjacent KCND3 subunits, through both the N-terminal inactivation ball of a KCND3 subunit and a C-terminal helix from the adjacent KCND3 subunit, clamping them together; this interaction stabilizes the tetrameric form and modulates the channel gating kinetics namely channel activation and inactivation kinetics and rate of recovery from inactivation (PubMed:10676964, PubMed:17057713). Interacts with DPP6; this interaction modulates the channel gating kinetics namely channel activation and inactivation kinetics and rate of recovery from inactivation (By similarity). Interacts with KCNIP2; each KCNIP2 monomer interacts with two adjacent KCND3 subunits, through both the N-terminal inactivation ball of a KCND3 subunit and a C-terminal helix from the adjacent KCND3 subunit, clamping them together; this interaction modulates the channel gating kinetics (PubMed:10676964).</text>
</comment>
<comment type="interaction">
    <interactant intactId="EBI-7082853">
        <id>Q62897</id>
    </interactant>
    <interactant intactId="EBI-2120635">
        <id>Q9NZI2</id>
        <label>KCNIP1</label>
    </interactant>
    <organismsDiffer>true</organismsDiffer>
    <experiments>3</experiments>
</comment>
<comment type="subcellular location">
    <subcellularLocation>
        <location evidence="10 13">Cell membrane</location>
        <topology evidence="6">Multi-pass membrane protein</topology>
    </subcellularLocation>
    <subcellularLocation>
        <location evidence="13">Cell membrane</location>
        <location evidence="13">Sarcolemma</location>
        <topology evidence="6">Multi-pass membrane protein</topology>
    </subcellularLocation>
    <subcellularLocation>
        <location evidence="13">Cell projection</location>
        <location evidence="13">Dendrite</location>
    </subcellularLocation>
    <text evidence="10">Interaction with palmitoylated KCNIP2 and KCNIP3 enhances cell surface expression.</text>
</comment>
<comment type="alternative products">
    <event type="alternative splicing"/>
    <isoform>
        <id>Q62897-1</id>
        <name>1</name>
        <name>Kv4.3 long form</name>
        <sequence type="displayed"/>
    </isoform>
    <isoform>
        <id>Q62897-2</id>
        <name>2</name>
        <sequence type="described" ref="VSP_008831"/>
    </isoform>
    <isoform>
        <id>Q62897-3</id>
        <name>3</name>
        <sequence type="described" ref="VSP_008831 VSP_008832"/>
    </isoform>
</comment>
<comment type="tissue specificity">
    <text evidence="13 14 15 16 17">Highly expressed in brain, in particular in the retrosplenial cortex, medial habenula, anterior thalamus, hippocampus, cerebellum and lateral geniculate and superior colliculus (PubMed:8734615, PubMed:9001401, PubMed:9450548). Highly expressed in heart atrium (at protein level) and throughout the ventricle wall, in lung and vas deferens (PubMed:8734615, PubMed:8831489, PubMed:9450548).</text>
</comment>
<comment type="domain">
    <text evidence="4">Two N-terminal domains regulate binding to and modulation by KCNIP1.</text>
</comment>
<comment type="PTM">
    <text evidence="11">Regulated through phosphorylation at Ser-569 by CaMK2D.</text>
</comment>
<comment type="similarity">
    <text evidence="21">Belongs to the potassium channel family. D (Shal) (TC 1.A.1.2) subfamily. Kv4.3/KCND3 sub-subfamily.</text>
</comment>
<reference key="1">
    <citation type="journal article" date="1996" name="Circ. Res.">
        <title>Role of the Kv4.3 K+ channel in ventricular muscle. A molecular correlate for the transient outward current.</title>
        <authorList>
            <person name="Dixon J.E."/>
            <person name="Shi W."/>
            <person name="Wang H.-S."/>
            <person name="McDonald C."/>
            <person name="Yu H."/>
            <person name="Wymore R.S."/>
            <person name="Cohen I.S."/>
            <person name="McKinnon D."/>
        </authorList>
    </citation>
    <scope>NUCLEOTIDE SEQUENCE [MRNA] (ISOFORM 2)</scope>
    <scope>FUNCTION</scope>
    <scope>TRANSPORTER ACTIVITY</scope>
    <scope>TISSUE SPECIFICITY</scope>
</reference>
<reference key="2">
    <citation type="journal article" date="1996" name="J. Neurophysiol.">
        <title>Cloning of a novel component of A-type K+ channels operating at subthreshold potentials with unique expression in heart and brain.</title>
        <authorList>
            <person name="Serodio P."/>
            <person name="Vega-Saenz de Miera E."/>
            <person name="Rudy B."/>
        </authorList>
    </citation>
    <scope>NUCLEOTIDE SEQUENCE [MRNA] (ISOFORM 2)</scope>
    <scope>FUNCTION</scope>
    <scope>TRANSPORTER ACTIVITY</scope>
    <scope>TISSUE SPECIFICITY</scope>
    <source>
        <tissue>Brain</tissue>
    </source>
</reference>
<reference key="3">
    <citation type="journal article" date="1997" name="FEBS Lett.">
        <title>Cloning, expression and CNS distribution of Kv4.3, an A-type K+ channel alpha subunit.</title>
        <authorList>
            <person name="Tsaur M.-L."/>
            <person name="Chou C.-C."/>
            <person name="Shih Y.-H."/>
            <person name="Wang H.-L."/>
        </authorList>
    </citation>
    <scope>NUCLEOTIDE SEQUENCE [MRNA] (ISOFORM 3)</scope>
    <scope>FUNCTION</scope>
    <scope>TRANSPORTER ACTIVITY</scope>
    <scope>TISSUE SPECIFICITY</scope>
    <source>
        <tissue>Hippocampus</tissue>
    </source>
</reference>
<reference key="4">
    <citation type="journal article" date="1997" name="FEBS Lett.">
        <title>Molecular cloning and tissue distribution of an alternatively spliced variant of an A-type K+ channel alpha-subunit, Kv4.3 in the rat.</title>
        <authorList>
            <person name="Ohya S."/>
            <person name="Tanaka M."/>
            <person name="Oku T."/>
            <person name="Asai Y."/>
            <person name="Watanabe M."/>
            <person name="Giles W.R."/>
            <person name="Imaizumi Y."/>
        </authorList>
    </citation>
    <scope>NUCLEOTIDE SEQUENCE [MRNA] (ISOFORM 1)</scope>
    <scope>FUNCTION</scope>
    <scope>TRANSPORTER ACTIVITY</scope>
    <scope>TISSUE SPECIFICITY</scope>
    <source>
        <tissue>Smooth muscle</tissue>
        <tissue>Vas deferens</tissue>
    </source>
</reference>
<reference key="5">
    <citation type="journal article" date="2001" name="J. Biol. Chem.">
        <title>Remodeling of Kv4.3 potassium channel gene expression under the control of sex hormones.</title>
        <authorList>
            <person name="Song M."/>
            <person name="Helguera G."/>
            <person name="Eghbali M."/>
            <person name="Zhu N."/>
            <person name="Zarei M.M."/>
            <person name="Olcese R."/>
            <person name="Toro L."/>
            <person name="Stefani E."/>
        </authorList>
    </citation>
    <scope>NUCLEOTIDE SEQUENCE [MRNA] (ISOFORM 1)</scope>
    <source>
        <strain>Sprague-Dawley</strain>
        <tissue>Uterus</tissue>
    </source>
</reference>
<reference key="6">
    <citation type="journal article" date="1997" name="Circ. Res.">
        <title>Decreased expression of Kv4.2 and novel Kv4.3 K+ channel subunit mRNAs in ventricles of renovascular hypertensive rats.</title>
        <authorList>
            <person name="Takimoto K."/>
            <person name="Li D."/>
            <person name="Hershman K.M."/>
            <person name="Li P."/>
            <person name="Jackson E.K."/>
            <person name="Levitan E.S."/>
        </authorList>
    </citation>
    <scope>NUCLEOTIDE SEQUENCE [MRNA] OF 455-606 (ISOFORM 1)</scope>
    <source>
        <strain>Sprague-Dawley</strain>
    </source>
</reference>
<reference key="7">
    <citation type="journal article" date="2000" name="Nature">
        <title>Modulation of A-type potassium channels by a family of calcium sensors.</title>
        <authorList>
            <person name="An W.F."/>
            <person name="Bowlby M.R."/>
            <person name="Betty M."/>
            <person name="Cao J."/>
            <person name="Ling H.-P."/>
            <person name="Mendoza G."/>
            <person name="Hinson J.W."/>
            <person name="Mattsson K.I."/>
            <person name="Strassle B.W."/>
            <person name="Trimmer J.S."/>
            <person name="Rhodes K.J."/>
        </authorList>
    </citation>
    <scope>INTERACTION WITH KCNIP1; KCNIP2 AND KCNIP3</scope>
</reference>
<reference key="8">
    <citation type="journal article" date="2002" name="J. Biol. Chem.">
        <title>Palmitoylation of KChIP splicing variants is required for efficient cell surface expression of Kv4.3 channels.</title>
        <authorList>
            <person name="Takimoto K."/>
            <person name="Yang E.-K."/>
            <person name="Conforti L."/>
        </authorList>
    </citation>
    <scope>SUBCELLULAR LOCATION</scope>
</reference>
<reference key="9">
    <citation type="journal article" date="2002" name="Proc. Natl. Acad. Sci. U.S.A.">
        <title>Elimination of fast inactivation in Kv4 A-type potassium channels by an auxiliary subunit domain.</title>
        <authorList>
            <person name="Holmqvist M.H."/>
            <person name="Cao J."/>
            <person name="Hernandez-Pineda R."/>
            <person name="Jacobson M.D."/>
            <person name="Carroll K.I."/>
            <person name="Sung M.A."/>
            <person name="Betty M."/>
            <person name="Ge P."/>
            <person name="Gilbride K.J."/>
            <person name="Brown M.E."/>
            <person name="Jurman M.E."/>
            <person name="Lawson D."/>
            <person name="Silos-Santiago I."/>
            <person name="Xie Y."/>
            <person name="Covarrubias M."/>
            <person name="Rhodes K.J."/>
            <person name="Distefano P.S."/>
            <person name="An W.F."/>
        </authorList>
    </citation>
    <scope>INTERACTION WITH KCNIP4</scope>
</reference>
<reference key="10">
    <citation type="journal article" date="2005" name="Am. J. Physiol.">
        <title>Regulation of Kv4.3 currents by Ca2+/calmodulin-dependent protein kinase II.</title>
        <authorList>
            <person name="Sergeant G.P."/>
            <person name="Ohya S."/>
            <person name="Reihill J.A."/>
            <person name="Perrino B.A."/>
            <person name="Amberg G.C."/>
            <person name="Imaizumi Y."/>
            <person name="Horowitz B."/>
            <person name="Sanders K.M."/>
            <person name="Koh S.D."/>
        </authorList>
    </citation>
    <scope>PHOSPHORYLATION AT SER-569 BY CAMK2D</scope>
</reference>
<reference evidence="21" key="11">
    <citation type="journal article" date="2009" name="Circ. Res.">
        <title>Kv4 potassium channels form a tripartite complex with the anchoring protein SAP97 and CaMKII in cardiac myocytes.</title>
        <authorList>
            <person name="El-Haou S."/>
            <person name="Balse E."/>
            <person name="Neyroud N."/>
            <person name="Dilanian G."/>
            <person name="Gavillet B."/>
            <person name="Abriel H."/>
            <person name="Coulombe A."/>
            <person name="Jeromin A."/>
            <person name="Hatem S.N."/>
        </authorList>
    </citation>
    <scope>INTERACTION WITH DLG1</scope>
    <scope>TISSUE SPECIFICITY</scope>
    <scope>SUBCELLULAR LOCATION</scope>
</reference>
<reference key="12">
    <citation type="journal article" date="2012" name="Nat. Commun.">
        <title>Quantitative maps of protein phosphorylation sites across 14 different rat organs and tissues.</title>
        <authorList>
            <person name="Lundby A."/>
            <person name="Secher A."/>
            <person name="Lage K."/>
            <person name="Nordsborg N.B."/>
            <person name="Dmytriyev A."/>
            <person name="Lundby C."/>
            <person name="Olsen J.V."/>
        </authorList>
    </citation>
    <scope>PHOSPHORYLATION [LARGE SCALE ANALYSIS] AT SER-153</scope>
    <scope>IDENTIFICATION BY MASS SPECTROMETRY [LARGE SCALE ANALYSIS]</scope>
</reference>
<reference evidence="25" key="13">
    <citation type="journal article" date="2006" name="Nat. Struct. Mol. Biol.">
        <title>Three-dimensional structure of the KChIP1-Kv4.3 T1 complex reveals a cross-shaped octamer.</title>
        <authorList>
            <person name="Pioletti M."/>
            <person name="Findeisen F."/>
            <person name="Hura G.L."/>
            <person name="Minor D.L. Jr."/>
        </authorList>
    </citation>
    <scope>X-RAY CRYSTALLOGRAPHY (3.35 ANGSTROMS) OF 2-143 IN COMPLEX WITH KCNIP1 AND ZN(2+)</scope>
    <scope>FUNCTION</scope>
    <scope>TRANSPORTER ACTIVITY</scope>
</reference>
<accession>Q62897</accession>
<accession>O08723</accession>
<accession>P70622</accession>
<accession>Q63286</accession>
<accession>Q99P42</accession>
<feature type="chain" id="PRO_0000054071" description="A-type voltage-gated potassium channel KCND3">
    <location>
        <begin position="1"/>
        <end position="655"/>
    </location>
</feature>
<feature type="topological domain" description="Cytoplasmic" evidence="4">
    <location>
        <begin position="1"/>
        <end position="182"/>
    </location>
</feature>
<feature type="transmembrane region" description="Helical; Name=Segment S1" evidence="4">
    <location>
        <begin position="183"/>
        <end position="204"/>
    </location>
</feature>
<feature type="topological domain" description="Extracellular" evidence="4">
    <location>
        <begin position="205"/>
        <end position="223"/>
    </location>
</feature>
<feature type="transmembrane region" description="Helical; Name=Segment S2" evidence="4">
    <location>
        <begin position="224"/>
        <end position="246"/>
    </location>
</feature>
<feature type="topological domain" description="Cytoplasmic" evidence="4">
    <location>
        <begin position="247"/>
        <end position="253"/>
    </location>
</feature>
<feature type="transmembrane region" description="Helical; Name=Segment S3" evidence="4">
    <location>
        <begin position="254"/>
        <end position="277"/>
    </location>
</feature>
<feature type="topological domain" description="Extracellular" evidence="4">
    <location>
        <begin position="278"/>
        <end position="283"/>
    </location>
</feature>
<feature type="transmembrane region" description="Helical; Voltage-sensor; Name=Segment S4" evidence="4">
    <location>
        <begin position="284"/>
        <end position="306"/>
    </location>
</feature>
<feature type="topological domain" description="Cytoplasmic" evidence="4">
    <location>
        <begin position="307"/>
        <end position="318"/>
    </location>
</feature>
<feature type="transmembrane region" description="Helical; Name=Segment S5" evidence="4">
    <location>
        <begin position="319"/>
        <end position="343"/>
    </location>
</feature>
<feature type="topological domain" description="Extracellular" evidence="4">
    <location>
        <begin position="344"/>
        <end position="352"/>
    </location>
</feature>
<feature type="intramembrane region" description="Helical; Name=Pore helix" evidence="4">
    <location>
        <begin position="353"/>
        <end position="366"/>
    </location>
</feature>
<feature type="intramembrane region" evidence="1">
    <location>
        <begin position="367"/>
        <end position="374"/>
    </location>
</feature>
<feature type="transmembrane region" description="Helical; Name=Segment S6" evidence="4">
    <location>
        <begin position="378"/>
        <end position="400"/>
    </location>
</feature>
<feature type="topological domain" description="Cytoplasmic" evidence="4">
    <location>
        <begin position="401"/>
        <end position="655"/>
    </location>
</feature>
<feature type="region of interest" description="Interaction with KCNIP1" evidence="4">
    <location>
        <begin position="6"/>
        <end position="21"/>
    </location>
</feature>
<feature type="region of interest" description="Interaction with KCNIP1" evidence="4">
    <location>
        <begin position="70"/>
        <end position="78"/>
    </location>
</feature>
<feature type="region of interest" description="Interaction with KCNIP1 and KCNIP2" evidence="4">
    <location>
        <begin position="470"/>
        <end position="487"/>
    </location>
</feature>
<feature type="region of interest" description="Mediates dendritic targeting" evidence="2">
    <location>
        <begin position="474"/>
        <end position="489"/>
    </location>
</feature>
<feature type="region of interest" description="Disordered" evidence="7">
    <location>
        <begin position="523"/>
        <end position="565"/>
    </location>
</feature>
<feature type="region of interest" description="Disordered" evidence="7">
    <location>
        <begin position="616"/>
        <end position="647"/>
    </location>
</feature>
<feature type="short sequence motif" description="Selectivity filter" evidence="1">
    <location>
        <begin position="367"/>
        <end position="372"/>
    </location>
</feature>
<feature type="compositionally biased region" description="Low complexity" evidence="7">
    <location>
        <begin position="529"/>
        <end position="548"/>
    </location>
</feature>
<feature type="compositionally biased region" description="Polar residues" evidence="7">
    <location>
        <begin position="637"/>
        <end position="647"/>
    </location>
</feature>
<feature type="binding site" description="in chain B" evidence="12 25">
    <location>
        <position position="104"/>
    </location>
    <ligand>
        <name>Zn(2+)</name>
        <dbReference type="ChEBI" id="CHEBI:29105"/>
        <note>ligand shared between homodimeric partners</note>
    </ligand>
</feature>
<feature type="binding site" description="in chain D" evidence="12 25">
    <location>
        <position position="110"/>
    </location>
    <ligand>
        <name>Zn(2+)</name>
        <dbReference type="ChEBI" id="CHEBI:29105"/>
        <note>ligand shared between homodimeric partners</note>
    </ligand>
</feature>
<feature type="binding site" description="in chain B" evidence="12 25">
    <location>
        <position position="131"/>
    </location>
    <ligand>
        <name>Zn(2+)</name>
        <dbReference type="ChEBI" id="CHEBI:29105"/>
        <note>ligand shared between homodimeric partners</note>
    </ligand>
</feature>
<feature type="binding site" description="in chain B" evidence="12 25">
    <location>
        <position position="132"/>
    </location>
    <ligand>
        <name>Zn(2+)</name>
        <dbReference type="ChEBI" id="CHEBI:29105"/>
        <note>ligand shared between homodimeric partners</note>
    </ligand>
</feature>
<feature type="binding site" evidence="3">
    <location>
        <position position="367"/>
    </location>
    <ligand>
        <name>K(+)</name>
        <dbReference type="ChEBI" id="CHEBI:29103"/>
        <note>ligand shared between homotetrameric partners</note>
    </ligand>
</feature>
<feature type="binding site" evidence="3">
    <location>
        <position position="368"/>
    </location>
    <ligand>
        <name>K(+)</name>
        <dbReference type="ChEBI" id="CHEBI:29103"/>
        <note>ligand shared between homotetrameric partners</note>
    </ligand>
</feature>
<feature type="binding site" evidence="3">
    <location>
        <position position="369"/>
    </location>
    <ligand>
        <name>K(+)</name>
        <dbReference type="ChEBI" id="CHEBI:29103"/>
        <note>ligand shared between homotetrameric partners</note>
    </ligand>
</feature>
<feature type="binding site" evidence="3">
    <location>
        <position position="370"/>
    </location>
    <ligand>
        <name>K(+)</name>
        <dbReference type="ChEBI" id="CHEBI:29103"/>
        <note>ligand shared between homotetrameric partners</note>
    </ligand>
</feature>
<feature type="modified residue" description="Phosphoserine" evidence="26">
    <location>
        <position position="153"/>
    </location>
</feature>
<feature type="modified residue" description="Phosphothreonine" evidence="5">
    <location>
        <position position="459"/>
    </location>
</feature>
<feature type="modified residue" description="Phosphoserine; by CaMK2D" evidence="11">
    <location>
        <position position="569"/>
    </location>
</feature>
<feature type="modified residue" description="Phosphoserine" evidence="5">
    <location>
        <position position="585"/>
    </location>
</feature>
<feature type="splice variant" id="VSP_008831" description="In isoform 2 and isoform 3." evidence="18 19 20">
    <location>
        <begin position="488"/>
        <end position="506"/>
    </location>
</feature>
<feature type="splice variant" id="VSP_008832" description="In isoform 3." evidence="20">
    <original>SQITTAIISIPTPPALTPEGESRPPPASPGPNTNIPSITSNVVKVSVL</original>
    <variation>QDQEQPRGRVVTCKQEEIITLCI</variation>
    <location>
        <begin position="608"/>
        <end position="655"/>
    </location>
</feature>
<feature type="sequence conflict" description="In Ref. 3; AAA80459." evidence="21" ref="3">
    <original>L</original>
    <variation>H</variation>
    <location>
        <position position="124"/>
    </location>
</feature>
<feature type="sequence conflict" description="In Ref. 2; AAC52695 and 5; AAK07651." evidence="21" ref="2 5">
    <original>S</original>
    <variation>T</variation>
    <location>
        <position position="404"/>
    </location>
</feature>
<feature type="sequence conflict" description="In Ref. 3; AAA80459." evidence="21" ref="3">
    <original>S</original>
    <variation>T</variation>
    <location>
        <position position="569"/>
    </location>
</feature>
<feature type="sequence conflict" description="In Ref. 2; AAC52695." evidence="21" ref="2">
    <original>P</original>
    <variation>A</variation>
    <location>
        <position position="631"/>
    </location>
</feature>
<feature type="sequence conflict" description="In Ref. 1; AAB18337 and 4; BAA24525." evidence="21" ref="1 4">
    <original>V</original>
    <variation>A</variation>
    <location>
        <position position="654"/>
    </location>
</feature>
<feature type="turn" evidence="27">
    <location>
        <begin position="6"/>
        <end position="8"/>
    </location>
</feature>
<feature type="helix" evidence="27">
    <location>
        <begin position="9"/>
        <end position="16"/>
    </location>
</feature>
<feature type="strand" evidence="27">
    <location>
        <begin position="41"/>
        <end position="46"/>
    </location>
</feature>
<feature type="strand" evidence="27">
    <location>
        <begin position="49"/>
        <end position="54"/>
    </location>
</feature>
<feature type="helix" evidence="27">
    <location>
        <begin position="55"/>
        <end position="59"/>
    </location>
</feature>
<feature type="turn" evidence="27">
    <location>
        <begin position="65"/>
        <end position="67"/>
    </location>
</feature>
<feature type="helix" evidence="27">
    <location>
        <begin position="70"/>
        <end position="74"/>
    </location>
</feature>
<feature type="turn" evidence="27">
    <location>
        <begin position="77"/>
        <end position="80"/>
    </location>
</feature>
<feature type="strand" evidence="27">
    <location>
        <begin position="81"/>
        <end position="84"/>
    </location>
</feature>
<feature type="helix" evidence="27">
    <location>
        <begin position="88"/>
        <end position="99"/>
    </location>
</feature>
<feature type="helix" evidence="27">
    <location>
        <begin position="111"/>
        <end position="121"/>
    </location>
</feature>
<feature type="turn" evidence="27">
    <location>
        <begin position="130"/>
        <end position="132"/>
    </location>
</feature>
<feature type="helix" evidence="27">
    <location>
        <begin position="133"/>
        <end position="138"/>
    </location>
</feature>
<name>KCND3_RAT</name>
<proteinExistence type="evidence at protein level"/>
<gene>
    <name evidence="24" type="primary">Kcnd3</name>
</gene>